<sequence>MELYETSPYFYQEPRFYDGENYLPVHLQGFEPPGYERTELTLSPEAPGPLEDKGLGTPEHCPGQCLPWACKVCKRKSVSVDRRRAATLREKRRLKKVNEAFEALKRSTLLNPNQRLPKVEILRSAIQYIERLQALLSSLNQEERDLRYRGGGGPQPGVPSECSSHSASCSPEWGSALEFSANPGDHLLTADPTDAHNLHSLTSIVDSITVEDVSVAFPDETMPN</sequence>
<reference key="1">
    <citation type="journal article" date="1989" name="EMBO J.">
        <title>Differential expression of myogenic determination genes in muscle cells: possible autoactivation by the Myf gene products.</title>
        <authorList>
            <person name="Braun T."/>
            <person name="Bober E."/>
            <person name="Buschhausen-Denker G."/>
            <person name="Kohtz S."/>
            <person name="Grzeschik K.-H."/>
            <person name="Arnold H.H."/>
        </authorList>
    </citation>
    <scope>PRELIMINARY NUCLEOTIDE SEQUENCE [MRNA]</scope>
    <source>
        <tissue>Skeletal muscle</tissue>
    </source>
</reference>
<reference key="2">
    <citation type="journal article" date="1990" name="EMBO J.">
        <authorList>
            <person name="Braun T."/>
            <person name="Bober E."/>
            <person name="Buschhausen-Denker G."/>
            <person name="Kohtz S."/>
            <person name="Grzeschik K.-H."/>
            <person name="Arnold H.H."/>
        </authorList>
    </citation>
    <scope>ERRATUM OF PUBMED:2583111</scope>
    <scope>SEQUENCE REVISION</scope>
</reference>
<reference key="3">
    <citation type="journal article" date="1991" name="J. Cell Biol.">
        <title>Transcription of the muscle regulatory gene Myf4 is regulated by serum components, peptide growth factors and signaling pathways involving G proteins.</title>
        <authorList>
            <person name="Salminen A."/>
            <person name="Braun T."/>
            <person name="Buchberger A."/>
            <person name="Juers S."/>
            <person name="Winter B."/>
            <person name="Arnold H.H."/>
        </authorList>
    </citation>
    <scope>NUCLEOTIDE SEQUENCE [GENOMIC DNA]</scope>
</reference>
<reference key="4">
    <citation type="submission" date="2003-05" db="EMBL/GenBank/DDBJ databases">
        <title>Cloning of human full-length CDSs in BD Creator(TM) system donor vector.</title>
        <authorList>
            <person name="Kalnine N."/>
            <person name="Chen X."/>
            <person name="Rolfs A."/>
            <person name="Halleck A."/>
            <person name="Hines L."/>
            <person name="Eisenstein S."/>
            <person name="Koundinya M."/>
            <person name="Raphael J."/>
            <person name="Moreira D."/>
            <person name="Kelley T."/>
            <person name="LaBaer J."/>
            <person name="Lin Y."/>
            <person name="Phelan M."/>
            <person name="Farmer A."/>
        </authorList>
    </citation>
    <scope>NUCLEOTIDE SEQUENCE [LARGE SCALE MRNA]</scope>
</reference>
<reference key="5">
    <citation type="submission" date="2005-07" db="EMBL/GenBank/DDBJ databases">
        <authorList>
            <person name="Mural R.J."/>
            <person name="Istrail S."/>
            <person name="Sutton G.G."/>
            <person name="Florea L."/>
            <person name="Halpern A.L."/>
            <person name="Mobarry C.M."/>
            <person name="Lippert R."/>
            <person name="Walenz B."/>
            <person name="Shatkay H."/>
            <person name="Dew I."/>
            <person name="Miller J.R."/>
            <person name="Flanigan M.J."/>
            <person name="Edwards N.J."/>
            <person name="Bolanos R."/>
            <person name="Fasulo D."/>
            <person name="Halldorsson B.V."/>
            <person name="Hannenhalli S."/>
            <person name="Turner R."/>
            <person name="Yooseph S."/>
            <person name="Lu F."/>
            <person name="Nusskern D.R."/>
            <person name="Shue B.C."/>
            <person name="Zheng X.H."/>
            <person name="Zhong F."/>
            <person name="Delcher A.L."/>
            <person name="Huson D.H."/>
            <person name="Kravitz S.A."/>
            <person name="Mouchard L."/>
            <person name="Reinert K."/>
            <person name="Remington K.A."/>
            <person name="Clark A.G."/>
            <person name="Waterman M.S."/>
            <person name="Eichler E.E."/>
            <person name="Adams M.D."/>
            <person name="Hunkapiller M.W."/>
            <person name="Myers E.W."/>
            <person name="Venter J.C."/>
        </authorList>
    </citation>
    <scope>NUCLEOTIDE SEQUENCE [LARGE SCALE GENOMIC DNA]</scope>
</reference>
<reference key="6">
    <citation type="journal article" date="2004" name="Genome Res.">
        <title>The status, quality, and expansion of the NIH full-length cDNA project: the Mammalian Gene Collection (MGC).</title>
        <authorList>
            <consortium name="The MGC Project Team"/>
        </authorList>
    </citation>
    <scope>NUCLEOTIDE SEQUENCE [LARGE SCALE MRNA]</scope>
    <source>
        <tissue>Eye</tissue>
    </source>
</reference>
<reference key="7">
    <citation type="journal article" date="2014" name="FEBS J.">
        <title>Muscle lim protein isoform negatively regulates striated muscle actin dynamics and differentiation.</title>
        <authorList>
            <person name="Vafiadaki E."/>
            <person name="Arvanitis D.A."/>
            <person name="Papalouka V."/>
            <person name="Terzis G."/>
            <person name="Roumeliotis T.I."/>
            <person name="Spengos K."/>
            <person name="Garbis S.D."/>
            <person name="Manta P."/>
            <person name="Kranias E.G."/>
            <person name="Sanoudou D."/>
        </authorList>
    </citation>
    <scope>INTERACTION WITH CSRP3</scope>
</reference>
<comment type="function">
    <text evidence="1">Acts as a transcriptional activator that promotes transcription of muscle-specific target genes and plays a role in muscle differentiation, cell cycle exit and muscle atrophy. Essential for the development of functional embryonic skeletal fiber muscle differentiation. However is dispensable for postnatal skeletal muscle growth; phosphorylation by CAMK2G inhibits its transcriptional activity in respons to muscle activity. Required for the recruitment of the FACT complex to muscle-specific promoter regions, thus promoting gene expression initiation. During terminal myoblast differentiation, plays a role as a strong activator of transcription at loci with an open chromatin structure previously initiated by MYOD1. Together with MYF5 and MYOD1, co-occupies muscle-specific gene promoter core regions during myogenesis. Also cooperates with myocyte-specific enhancer factor MEF2D and BRG1-dependent recruitment of SWI/SNF chromatin-remodeling enzymes to alter chromatin structure at myogenic late gene promoters. Facilitates cell cycle exit during terminal muscle differentiation through the up-regulation of miR-20a expression, which in turn represses genes involved in cell cycle progression. Binds to the E-box containing (E1) promoter region of the miR-20a gene. Also plays a role in preventing reversal of muscle cell differentiation. Contributes to the atrophy-related gene expression in adult denervated muscles. Induces fibroblasts to differentiate into myoblasts (By similarity).</text>
</comment>
<comment type="subunit">
    <text evidence="1 4">Homodimer and heterodimer with E12; heterodimerization enhances MYOG DNA-binding and transcriptional activities. Interacts with SMARCA4/BRG1/BAF190A. Interacts (via C-terminal region) with SSRP1 and SUPT16H; the interaction is indicative of an interaction with the FACT complex (By similarity). Interacts with CSRP3.</text>
</comment>
<comment type="interaction">
    <interactant intactId="EBI-3906629">
        <id>P15173</id>
    </interactant>
    <interactant intactId="EBI-11096309">
        <id>Q9NYB9-2</id>
        <label>ABI2</label>
    </interactant>
    <organismsDiffer>false</organismsDiffer>
    <experiments>3</experiments>
</comment>
<comment type="interaction">
    <interactant intactId="EBI-3906629">
        <id>P15173</id>
    </interactant>
    <interactant intactId="EBI-1805814">
        <id>Q96RK4</id>
        <label>BBS4</label>
    </interactant>
    <organismsDiffer>false</organismsDiffer>
    <experiments>3</experiments>
</comment>
<comment type="interaction">
    <interactant intactId="EBI-3906629">
        <id>P15173</id>
    </interactant>
    <interactant intactId="EBI-10229433">
        <id>Q13515</id>
        <label>BFSP2</label>
    </interactant>
    <organismsDiffer>false</organismsDiffer>
    <experiments>3</experiments>
</comment>
<comment type="interaction">
    <interactant intactId="EBI-3906629">
        <id>P15173</id>
    </interactant>
    <interactant intactId="EBI-8844218">
        <id>Q7RTS1</id>
        <label>BHLHA15</label>
    </interactant>
    <organismsDiffer>false</organismsDiffer>
    <experiments>3</experiments>
</comment>
<comment type="interaction">
    <interactant intactId="EBI-3906629">
        <id>P15173</id>
    </interactant>
    <interactant intactId="EBI-744556">
        <id>Q96HB5</id>
        <label>CCDC120</label>
    </interactant>
    <organismsDiffer>false</organismsDiffer>
    <experiments>3</experiments>
</comment>
<comment type="interaction">
    <interactant intactId="EBI-3906629">
        <id>P15173</id>
    </interactant>
    <interactant intactId="EBI-10258115">
        <id>Q7Z6N9</id>
        <label>CCDC28A</label>
    </interactant>
    <organismsDiffer>false</organismsDiffer>
    <experiments>6</experiments>
</comment>
<comment type="interaction">
    <interactant intactId="EBI-3906629">
        <id>P15173</id>
    </interactant>
    <interactant intactId="EBI-355471">
        <id>Q8IWP9</id>
        <label>CCDC28A</label>
    </interactant>
    <organismsDiffer>false</organismsDiffer>
    <experiments>4</experiments>
</comment>
<comment type="interaction">
    <interactant intactId="EBI-3906629">
        <id>P15173</id>
    </interactant>
    <interactant intactId="EBI-742422">
        <id>Q96M91</id>
        <label>CFAP53</label>
    </interactant>
    <organismsDiffer>false</organismsDiffer>
    <experiments>3</experiments>
</comment>
<comment type="interaction">
    <interactant intactId="EBI-3906629">
        <id>P15173</id>
    </interactant>
    <interactant intactId="EBI-739780">
        <id>Q96AJ1</id>
        <label>CLUAP1</label>
    </interactant>
    <organismsDiffer>false</organismsDiffer>
    <experiments>7</experiments>
</comment>
<comment type="interaction">
    <interactant intactId="EBI-3906629">
        <id>P15173</id>
    </interactant>
    <interactant intactId="EBI-13063650">
        <id>O95639-2</id>
        <label>CPSF4</label>
    </interactant>
    <organismsDiffer>false</organismsDiffer>
    <experiments>3</experiments>
</comment>
<comment type="interaction">
    <interactant intactId="EBI-3906629">
        <id>P15173</id>
    </interactant>
    <interactant intactId="EBI-11962928">
        <id>Q9UI47-2</id>
        <label>CTNNA3</label>
    </interactant>
    <organismsDiffer>false</organismsDiffer>
    <experiments>3</experiments>
</comment>
<comment type="interaction">
    <interactant intactId="EBI-3906629">
        <id>P15173</id>
    </interactant>
    <interactant intactId="EBI-398610">
        <id>O60573</id>
        <label>EIF4E2</label>
    </interactant>
    <organismsDiffer>false</organismsDiffer>
    <experiments>4</experiments>
</comment>
<comment type="interaction">
    <interactant intactId="EBI-3906629">
        <id>P15173</id>
    </interactant>
    <interactant intactId="EBI-1752811">
        <id>Q9BQ89</id>
        <label>FAM110A</label>
    </interactant>
    <organismsDiffer>false</organismsDiffer>
    <experiments>3</experiments>
</comment>
<comment type="interaction">
    <interactant intactId="EBI-3906629">
        <id>P15173</id>
    </interactant>
    <interactant intactId="EBI-6658203">
        <id>Q86YD7</id>
        <label>FAM90A1</label>
    </interactant>
    <organismsDiffer>false</organismsDiffer>
    <experiments>3</experiments>
</comment>
<comment type="interaction">
    <interactant intactId="EBI-3906629">
        <id>P15173</id>
    </interactant>
    <interactant intactId="EBI-11976617">
        <id>Q6QHK4</id>
        <label>FIGLA</label>
    </interactant>
    <organismsDiffer>false</organismsDiffer>
    <experiments>5</experiments>
</comment>
<comment type="interaction">
    <interactant intactId="EBI-3906629">
        <id>P15173</id>
    </interactant>
    <interactant intactId="EBI-713279">
        <id>P02792</id>
        <label>FTL</label>
    </interactant>
    <organismsDiffer>false</organismsDiffer>
    <experiments>4</experiments>
</comment>
<comment type="interaction">
    <interactant intactId="EBI-3906629">
        <id>P15173</id>
    </interactant>
    <interactant intactId="EBI-744104">
        <id>P55040</id>
        <label>GEM</label>
    </interactant>
    <organismsDiffer>false</organismsDiffer>
    <experiments>3</experiments>
</comment>
<comment type="interaction">
    <interactant intactId="EBI-3906629">
        <id>P15173</id>
    </interactant>
    <interactant intactId="EBI-6447217">
        <id>O75409</id>
        <label>H2AP</label>
    </interactant>
    <organismsDiffer>false</organismsDiffer>
    <experiments>6</experiments>
</comment>
<comment type="interaction">
    <interactant intactId="EBI-3906629">
        <id>P15173</id>
    </interactant>
    <interactant intactId="EBI-1215527">
        <id>P41134</id>
        <label>ID1</label>
    </interactant>
    <organismsDiffer>false</organismsDiffer>
    <experiments>4</experiments>
</comment>
<comment type="interaction">
    <interactant intactId="EBI-3906629">
        <id>P15173</id>
    </interactant>
    <interactant intactId="EBI-2557212">
        <id>Q70UQ0</id>
        <label>IKBIP</label>
    </interactant>
    <organismsDiffer>false</organismsDiffer>
    <experiments>4</experiments>
</comment>
<comment type="interaction">
    <interactant intactId="EBI-3906629">
        <id>P15173</id>
    </interactant>
    <interactant intactId="EBI-12190633">
        <id>Q70UQ0-4</id>
        <label>IKBIP</label>
    </interactant>
    <organismsDiffer>false</organismsDiffer>
    <experiments>4</experiments>
</comment>
<comment type="interaction">
    <interactant intactId="EBI-3906629">
        <id>P15173</id>
    </interactant>
    <interactant intactId="EBI-17178971">
        <id>Q14005-2</id>
        <label>IL16</label>
    </interactant>
    <organismsDiffer>false</organismsDiffer>
    <experiments>3</experiments>
</comment>
<comment type="interaction">
    <interactant intactId="EBI-3906629">
        <id>P15173</id>
    </interactant>
    <interactant intactId="EBI-739890">
        <id>Q9P2K6</id>
        <label>KLHL42</label>
    </interactant>
    <organismsDiffer>false</organismsDiffer>
    <experiments>3</experiments>
</comment>
<comment type="interaction">
    <interactant intactId="EBI-3906629">
        <id>P15173</id>
    </interactant>
    <interactant intactId="EBI-11742507">
        <id>Q8TAP4-4</id>
        <label>LMO3</label>
    </interactant>
    <organismsDiffer>false</organismsDiffer>
    <experiments>3</experiments>
</comment>
<comment type="interaction">
    <interactant intactId="EBI-3906629">
        <id>P15173</id>
    </interactant>
    <interactant intactId="EBI-947402">
        <id>O60336</id>
        <label>MAPKBP1</label>
    </interactant>
    <organismsDiffer>false</organismsDiffer>
    <experiments>3</experiments>
</comment>
<comment type="interaction">
    <interactant intactId="EBI-3906629">
        <id>P15173</id>
    </interactant>
    <interactant intactId="EBI-11978579">
        <id>O95983-2</id>
        <label>MBD3</label>
    </interactant>
    <organismsDiffer>false</organismsDiffer>
    <experiments>3</experiments>
</comment>
<comment type="interaction">
    <interactant intactId="EBI-3906629">
        <id>P15173</id>
    </interactant>
    <interactant intactId="EBI-744248">
        <id>P40692</id>
        <label>MLH1</label>
    </interactant>
    <organismsDiffer>false</organismsDiffer>
    <experiments>12</experiments>
</comment>
<comment type="interaction">
    <interactant intactId="EBI-3906629">
        <id>P15173</id>
    </interactant>
    <interactant intactId="EBI-11750983">
        <id>Q9HC98-4</id>
        <label>NEK6</label>
    </interactant>
    <organismsDiffer>false</organismsDiffer>
    <experiments>3</experiments>
</comment>
<comment type="interaction">
    <interactant intactId="EBI-3906629">
        <id>P15173</id>
    </interactant>
    <interactant intactId="EBI-1046387">
        <id>Q96NG3</id>
        <label>ODAD4</label>
    </interactant>
    <organismsDiffer>false</organismsDiffer>
    <experiments>3</experiments>
</comment>
<comment type="interaction">
    <interactant intactId="EBI-3906629">
        <id>P15173</id>
    </interactant>
    <interactant intactId="EBI-3925298">
        <id>Q8N7B6</id>
        <label>PACRGL</label>
    </interactant>
    <organismsDiffer>false</organismsDiffer>
    <experiments>3</experiments>
</comment>
<comment type="interaction">
    <interactant intactId="EBI-3906629">
        <id>P15173</id>
    </interactant>
    <interactant intactId="EBI-10694433">
        <id>Q8N7B6-2</id>
        <label>PACRGL</label>
    </interactant>
    <organismsDiffer>false</organismsDiffer>
    <experiments>3</experiments>
</comment>
<comment type="interaction">
    <interactant intactId="EBI-3906629">
        <id>P15173</id>
    </interactant>
    <interactant intactId="EBI-394753">
        <id>P52435</id>
        <label>POLR2J</label>
    </interactant>
    <organismsDiffer>false</organismsDiffer>
    <experiments>3</experiments>
</comment>
<comment type="interaction">
    <interactant intactId="EBI-3906629">
        <id>P15173</id>
    </interactant>
    <interactant intactId="EBI-742688">
        <id>Q9NZD8</id>
        <label>SPG21</label>
    </interactant>
    <organismsDiffer>false</organismsDiffer>
    <experiments>3</experiments>
</comment>
<comment type="interaction">
    <interactant intactId="EBI-3906629">
        <id>P15173</id>
    </interactant>
    <interactant intactId="EBI-722877">
        <id>Q99081</id>
        <label>TCF12</label>
    </interactant>
    <organismsDiffer>false</organismsDiffer>
    <experiments>2</experiments>
</comment>
<comment type="interaction">
    <interactant intactId="EBI-3906629">
        <id>P15173</id>
    </interactant>
    <interactant intactId="EBI-11741437">
        <id>Q08117-2</id>
        <label>TLE5</label>
    </interactant>
    <organismsDiffer>false</organismsDiffer>
    <experiments>3</experiments>
</comment>
<comment type="interaction">
    <interactant intactId="EBI-3906629">
        <id>P15173</id>
    </interactant>
    <interactant intactId="EBI-3918381">
        <id>Q96PN8</id>
        <label>TSSK3</label>
    </interactant>
    <organismsDiffer>false</organismsDiffer>
    <experiments>3</experiments>
</comment>
<comment type="interaction">
    <interactant intactId="EBI-3906629">
        <id>P15173</id>
    </interactant>
    <interactant intactId="EBI-707554">
        <id>O14530</id>
        <label>TXNDC9</label>
    </interactant>
    <organismsDiffer>false</organismsDiffer>
    <experiments>4</experiments>
</comment>
<comment type="interaction">
    <interactant intactId="EBI-3906629">
        <id>P15173</id>
    </interactant>
    <interactant intactId="EBI-739895">
        <id>Q8N6Y0</id>
        <label>USHBP1</label>
    </interactant>
    <organismsDiffer>false</organismsDiffer>
    <experiments>5</experiments>
</comment>
<comment type="interaction">
    <interactant intactId="EBI-3906629">
        <id>P15173</id>
    </interactant>
    <interactant intactId="EBI-3937908">
        <id>Q8WYQ9</id>
        <label>ZCCHC14</label>
    </interactant>
    <organismsDiffer>false</organismsDiffer>
    <experiments>3</experiments>
</comment>
<comment type="subcellular location">
    <subcellularLocation>
        <location>Nucleus</location>
    </subcellularLocation>
    <text evidence="1">Recruited to late myogenic gene promoter regulatory sequences with SMARCA4/BRG1/BAF190A and SWI/SNF chromatin-remodeling enzymes to promote chromatin-remodeling and transcription initiation in developing embryos.</text>
</comment>
<comment type="PTM">
    <text evidence="1">Phosphorylated by CAMK2G on threonine and serine amino acids in a muscle activity-dependent manner. Phosphorylation of Thr-87 impairs both DNA-binding and trans-activation functions in contracting muscles (By similarity).</text>
</comment>
<keyword id="KW-0010">Activator</keyword>
<keyword id="KW-0131">Cell cycle</keyword>
<keyword id="KW-0217">Developmental protein</keyword>
<keyword id="KW-0221">Differentiation</keyword>
<keyword id="KW-0238">DNA-binding</keyword>
<keyword id="KW-0517">Myogenesis</keyword>
<keyword id="KW-0539">Nucleus</keyword>
<keyword id="KW-0597">Phosphoprotein</keyword>
<keyword id="KW-1267">Proteomics identification</keyword>
<keyword id="KW-1185">Reference proteome</keyword>
<keyword id="KW-0804">Transcription</keyword>
<keyword id="KW-0805">Transcription regulation</keyword>
<protein>
    <recommendedName>
        <fullName>Myogenin</fullName>
    </recommendedName>
    <alternativeName>
        <fullName>Class C basic helix-loop-helix protein 3</fullName>
        <shortName>bHLHc3</shortName>
    </alternativeName>
    <alternativeName>
        <fullName>Myogenic factor 4</fullName>
        <shortName>Myf-4</shortName>
    </alternativeName>
</protein>
<gene>
    <name type="primary">MYOG</name>
    <name type="synonym">BHLHC3</name>
    <name type="synonym">MYF4</name>
</gene>
<feature type="chain" id="PRO_0000127375" description="Myogenin">
    <location>
        <begin position="1"/>
        <end position="224"/>
    </location>
</feature>
<feature type="domain" description="bHLH" evidence="3">
    <location>
        <begin position="81"/>
        <end position="132"/>
    </location>
</feature>
<feature type="modified residue" description="Phosphoserine; by CaMK2G" evidence="2">
    <location>
        <position position="77"/>
    </location>
</feature>
<feature type="modified residue" description="Phosphoserine; by CaMK2G" evidence="2">
    <location>
        <position position="79"/>
    </location>
</feature>
<feature type="modified residue" description="Phosphothreonine; by CaMK2G" evidence="2">
    <location>
        <position position="87"/>
    </location>
</feature>
<dbReference type="EMBL" id="X17651">
    <property type="protein sequence ID" value="CAA35641.1"/>
    <property type="status" value="ALT_SEQ"/>
    <property type="molecule type" value="mRNA"/>
</dbReference>
<dbReference type="EMBL" id="X62155">
    <property type="protein sequence ID" value="CAA44080.1"/>
    <property type="molecule type" value="Genomic_DNA"/>
</dbReference>
<dbReference type="EMBL" id="BT007233">
    <property type="protein sequence ID" value="AAP35897.1"/>
    <property type="molecule type" value="mRNA"/>
</dbReference>
<dbReference type="EMBL" id="CH471067">
    <property type="protein sequence ID" value="EAW91463.1"/>
    <property type="molecule type" value="Genomic_DNA"/>
</dbReference>
<dbReference type="EMBL" id="BC053899">
    <property type="protein sequence ID" value="AAH53899.1"/>
    <property type="molecule type" value="mRNA"/>
</dbReference>
<dbReference type="CCDS" id="CCDS1433.1"/>
<dbReference type="PIR" id="A41128">
    <property type="entry name" value="A41128"/>
</dbReference>
<dbReference type="RefSeq" id="NP_002470.2">
    <property type="nucleotide sequence ID" value="NM_002479.5"/>
</dbReference>
<dbReference type="SMR" id="P15173"/>
<dbReference type="BioGRID" id="110739">
    <property type="interactions" value="62"/>
</dbReference>
<dbReference type="DIP" id="DIP-159N"/>
<dbReference type="FunCoup" id="P15173">
    <property type="interactions" value="150"/>
</dbReference>
<dbReference type="IntAct" id="P15173">
    <property type="interactions" value="53"/>
</dbReference>
<dbReference type="MINT" id="P15173"/>
<dbReference type="STRING" id="9606.ENSP00000241651"/>
<dbReference type="iPTMnet" id="P15173"/>
<dbReference type="PhosphoSitePlus" id="P15173"/>
<dbReference type="BioMuta" id="MYOG"/>
<dbReference type="DMDM" id="127625"/>
<dbReference type="jPOST" id="P15173"/>
<dbReference type="MassIVE" id="P15173"/>
<dbReference type="PaxDb" id="9606-ENSP00000241651"/>
<dbReference type="PeptideAtlas" id="P15173"/>
<dbReference type="Antibodypedia" id="20659">
    <property type="antibodies" value="1134 antibodies from 41 providers"/>
</dbReference>
<dbReference type="DNASU" id="4656"/>
<dbReference type="Ensembl" id="ENST00000241651.5">
    <property type="protein sequence ID" value="ENSP00000241651.4"/>
    <property type="gene ID" value="ENSG00000122180.5"/>
</dbReference>
<dbReference type="GeneID" id="4656"/>
<dbReference type="KEGG" id="hsa:4656"/>
<dbReference type="MANE-Select" id="ENST00000241651.5">
    <property type="protein sequence ID" value="ENSP00000241651.4"/>
    <property type="RefSeq nucleotide sequence ID" value="NM_002479.6"/>
    <property type="RefSeq protein sequence ID" value="NP_002470.2"/>
</dbReference>
<dbReference type="UCSC" id="uc001gzd.5">
    <property type="organism name" value="human"/>
</dbReference>
<dbReference type="AGR" id="HGNC:7612"/>
<dbReference type="CTD" id="4656"/>
<dbReference type="DisGeNET" id="4656"/>
<dbReference type="GeneCards" id="MYOG"/>
<dbReference type="HGNC" id="HGNC:7612">
    <property type="gene designation" value="MYOG"/>
</dbReference>
<dbReference type="HPA" id="ENSG00000122180">
    <property type="expression patterns" value="Group enriched (skeletal muscle, tongue)"/>
</dbReference>
<dbReference type="MIM" id="159980">
    <property type="type" value="gene"/>
</dbReference>
<dbReference type="neXtProt" id="NX_P15173"/>
<dbReference type="OpenTargets" id="ENSG00000122180"/>
<dbReference type="PharmGKB" id="PA31417"/>
<dbReference type="VEuPathDB" id="HostDB:ENSG00000122180"/>
<dbReference type="eggNOG" id="KOG3960">
    <property type="taxonomic scope" value="Eukaryota"/>
</dbReference>
<dbReference type="GeneTree" id="ENSGT00950000182959"/>
<dbReference type="HOGENOM" id="CLU_100258_0_0_1"/>
<dbReference type="InParanoid" id="P15173"/>
<dbReference type="OMA" id="QELGGWW"/>
<dbReference type="OrthoDB" id="10049614at2759"/>
<dbReference type="PAN-GO" id="P15173">
    <property type="GO annotations" value="6 GO annotations based on evolutionary models"/>
</dbReference>
<dbReference type="PhylomeDB" id="P15173"/>
<dbReference type="TreeFam" id="TF316344"/>
<dbReference type="PathwayCommons" id="P15173"/>
<dbReference type="Reactome" id="R-HSA-525793">
    <property type="pathway name" value="Myogenesis"/>
</dbReference>
<dbReference type="Reactome" id="R-HSA-9839394">
    <property type="pathway name" value="TGFBR3 expression"/>
</dbReference>
<dbReference type="SignaLink" id="P15173"/>
<dbReference type="SIGNOR" id="P15173"/>
<dbReference type="BioGRID-ORCS" id="4656">
    <property type="hits" value="11 hits in 1166 CRISPR screens"/>
</dbReference>
<dbReference type="ChiTaRS" id="MYOG">
    <property type="organism name" value="human"/>
</dbReference>
<dbReference type="GeneWiki" id="Myogenin"/>
<dbReference type="GenomeRNAi" id="4656"/>
<dbReference type="Pharos" id="P15173">
    <property type="development level" value="Tbio"/>
</dbReference>
<dbReference type="PRO" id="PR:P15173"/>
<dbReference type="Proteomes" id="UP000005640">
    <property type="component" value="Chromosome 1"/>
</dbReference>
<dbReference type="RNAct" id="P15173">
    <property type="molecule type" value="protein"/>
</dbReference>
<dbReference type="Bgee" id="ENSG00000122180">
    <property type="expression patterns" value="Expressed in hindlimb stylopod muscle and 80 other cell types or tissues"/>
</dbReference>
<dbReference type="GO" id="GO:0000785">
    <property type="term" value="C:chromatin"/>
    <property type="evidence" value="ECO:0000247"/>
    <property type="project" value="NTNU_SB"/>
</dbReference>
<dbReference type="GO" id="GO:0005654">
    <property type="term" value="C:nucleoplasm"/>
    <property type="evidence" value="ECO:0000314"/>
    <property type="project" value="HPA"/>
</dbReference>
<dbReference type="GO" id="GO:0005634">
    <property type="term" value="C:nucleus"/>
    <property type="evidence" value="ECO:0000250"/>
    <property type="project" value="UniProtKB"/>
</dbReference>
<dbReference type="GO" id="GO:0032993">
    <property type="term" value="C:protein-DNA complex"/>
    <property type="evidence" value="ECO:0000250"/>
    <property type="project" value="UniProtKB"/>
</dbReference>
<dbReference type="GO" id="GO:0005667">
    <property type="term" value="C:transcription regulator complex"/>
    <property type="evidence" value="ECO:0000250"/>
    <property type="project" value="BHF-UCL"/>
</dbReference>
<dbReference type="GO" id="GO:0031490">
    <property type="term" value="F:chromatin DNA binding"/>
    <property type="evidence" value="ECO:0007669"/>
    <property type="project" value="Ensembl"/>
</dbReference>
<dbReference type="GO" id="GO:0001216">
    <property type="term" value="F:DNA-binding transcription activator activity"/>
    <property type="evidence" value="ECO:0000250"/>
    <property type="project" value="UniProtKB"/>
</dbReference>
<dbReference type="GO" id="GO:0001228">
    <property type="term" value="F:DNA-binding transcription activator activity, RNA polymerase II-specific"/>
    <property type="evidence" value="ECO:0000314"/>
    <property type="project" value="NTNU_SB"/>
</dbReference>
<dbReference type="GO" id="GO:0003700">
    <property type="term" value="F:DNA-binding transcription factor activity"/>
    <property type="evidence" value="ECO:0000250"/>
    <property type="project" value="UniProtKB"/>
</dbReference>
<dbReference type="GO" id="GO:0000981">
    <property type="term" value="F:DNA-binding transcription factor activity, RNA polymerase II-specific"/>
    <property type="evidence" value="ECO:0000247"/>
    <property type="project" value="NTNU_SB"/>
</dbReference>
<dbReference type="GO" id="GO:0070888">
    <property type="term" value="F:E-box binding"/>
    <property type="evidence" value="ECO:0000250"/>
    <property type="project" value="UniProtKB"/>
</dbReference>
<dbReference type="GO" id="GO:0046983">
    <property type="term" value="F:protein dimerization activity"/>
    <property type="evidence" value="ECO:0007669"/>
    <property type="project" value="InterPro"/>
</dbReference>
<dbReference type="GO" id="GO:0000978">
    <property type="term" value="F:RNA polymerase II cis-regulatory region sequence-specific DNA binding"/>
    <property type="evidence" value="ECO:0000318"/>
    <property type="project" value="GO_Central"/>
</dbReference>
<dbReference type="GO" id="GO:0000977">
    <property type="term" value="F:RNA polymerase II transcription regulatory region sequence-specific DNA binding"/>
    <property type="evidence" value="ECO:0000314"/>
    <property type="project" value="NTNU_SB"/>
</dbReference>
<dbReference type="GO" id="GO:0043565">
    <property type="term" value="F:sequence-specific DNA binding"/>
    <property type="evidence" value="ECO:0000314"/>
    <property type="project" value="NTNU_SB"/>
</dbReference>
<dbReference type="GO" id="GO:1990837">
    <property type="term" value="F:sequence-specific double-stranded DNA binding"/>
    <property type="evidence" value="ECO:0000314"/>
    <property type="project" value="ARUK-UCL"/>
</dbReference>
<dbReference type="GO" id="GO:0071392">
    <property type="term" value="P:cellular response to estradiol stimulus"/>
    <property type="evidence" value="ECO:0000250"/>
    <property type="project" value="UniProtKB"/>
</dbReference>
<dbReference type="GO" id="GO:0071363">
    <property type="term" value="P:cellular response to growth factor stimulus"/>
    <property type="evidence" value="ECO:0007669"/>
    <property type="project" value="Ensembl"/>
</dbReference>
<dbReference type="GO" id="GO:0071285">
    <property type="term" value="P:cellular response to lithium ion"/>
    <property type="evidence" value="ECO:0007669"/>
    <property type="project" value="Ensembl"/>
</dbReference>
<dbReference type="GO" id="GO:0071356">
    <property type="term" value="P:cellular response to tumor necrosis factor"/>
    <property type="evidence" value="ECO:0007669"/>
    <property type="project" value="Ensembl"/>
</dbReference>
<dbReference type="GO" id="GO:0042693">
    <property type="term" value="P:muscle cell fate commitment"/>
    <property type="evidence" value="ECO:0000250"/>
    <property type="project" value="BHF-UCL"/>
</dbReference>
<dbReference type="GO" id="GO:0008285">
    <property type="term" value="P:negative regulation of cell population proliferation"/>
    <property type="evidence" value="ECO:0000250"/>
    <property type="project" value="UniProtKB"/>
</dbReference>
<dbReference type="GO" id="GO:0001503">
    <property type="term" value="P:ossification"/>
    <property type="evidence" value="ECO:0007669"/>
    <property type="project" value="Ensembl"/>
</dbReference>
<dbReference type="GO" id="GO:0014737">
    <property type="term" value="P:positive regulation of muscle atrophy"/>
    <property type="evidence" value="ECO:0000250"/>
    <property type="project" value="UniProtKB"/>
</dbReference>
<dbReference type="GO" id="GO:0045663">
    <property type="term" value="P:positive regulation of myoblast differentiation"/>
    <property type="evidence" value="ECO:0000250"/>
    <property type="project" value="UniProtKB"/>
</dbReference>
<dbReference type="GO" id="GO:0010831">
    <property type="term" value="P:positive regulation of myotube differentiation"/>
    <property type="evidence" value="ECO:0000250"/>
    <property type="project" value="UniProtKB"/>
</dbReference>
<dbReference type="GO" id="GO:0048743">
    <property type="term" value="P:positive regulation of skeletal muscle fiber development"/>
    <property type="evidence" value="ECO:0000250"/>
    <property type="project" value="UniProtKB"/>
</dbReference>
<dbReference type="GO" id="GO:0045944">
    <property type="term" value="P:positive regulation of transcription by RNA polymerase II"/>
    <property type="evidence" value="ECO:0000314"/>
    <property type="project" value="NTNU_SB"/>
</dbReference>
<dbReference type="GO" id="GO:0051726">
    <property type="term" value="P:regulation of cell cycle"/>
    <property type="evidence" value="ECO:0000250"/>
    <property type="project" value="UniProtKB"/>
</dbReference>
<dbReference type="GO" id="GO:1901739">
    <property type="term" value="P:regulation of myoblast fusion"/>
    <property type="evidence" value="ECO:0000250"/>
    <property type="project" value="UniProtKB"/>
</dbReference>
<dbReference type="GO" id="GO:0014842">
    <property type="term" value="P:regulation of skeletal muscle satellite cell proliferation"/>
    <property type="evidence" value="ECO:0000250"/>
    <property type="project" value="UniProtKB"/>
</dbReference>
<dbReference type="GO" id="GO:0014894">
    <property type="term" value="P:response to denervation involved in regulation of muscle adaptation"/>
    <property type="evidence" value="ECO:0000250"/>
    <property type="project" value="UniProtKB"/>
</dbReference>
<dbReference type="GO" id="GO:0014878">
    <property type="term" value="P:response to electrical stimulus involved in regulation of muscle adaptation"/>
    <property type="evidence" value="ECO:0000250"/>
    <property type="project" value="UniProtKB"/>
</dbReference>
<dbReference type="GO" id="GO:0014873">
    <property type="term" value="P:response to muscle activity involved in regulation of muscle adaptation"/>
    <property type="evidence" value="ECO:0000250"/>
    <property type="project" value="UniProtKB"/>
</dbReference>
<dbReference type="GO" id="GO:0035914">
    <property type="term" value="P:skeletal muscle cell differentiation"/>
    <property type="evidence" value="ECO:0000318"/>
    <property type="project" value="GO_Central"/>
</dbReference>
<dbReference type="GO" id="GO:0048741">
    <property type="term" value="P:skeletal muscle fiber development"/>
    <property type="evidence" value="ECO:0007669"/>
    <property type="project" value="Ensembl"/>
</dbReference>
<dbReference type="GO" id="GO:0007519">
    <property type="term" value="P:skeletal muscle tissue development"/>
    <property type="evidence" value="ECO:0000304"/>
    <property type="project" value="ProtInc"/>
</dbReference>
<dbReference type="GO" id="GO:0014891">
    <property type="term" value="P:striated muscle atrophy"/>
    <property type="evidence" value="ECO:0000250"/>
    <property type="project" value="UniProtKB"/>
</dbReference>
<dbReference type="CDD" id="cd18935">
    <property type="entry name" value="bHLH_TS_MYOG_Myf4"/>
    <property type="match status" value="1"/>
</dbReference>
<dbReference type="FunFam" id="4.10.280.10:FF:000005">
    <property type="entry name" value="Myogenic factor"/>
    <property type="match status" value="1"/>
</dbReference>
<dbReference type="Gene3D" id="4.10.280.10">
    <property type="entry name" value="Helix-loop-helix DNA-binding domain"/>
    <property type="match status" value="1"/>
</dbReference>
<dbReference type="InterPro" id="IPR011598">
    <property type="entry name" value="bHLH_dom"/>
</dbReference>
<dbReference type="InterPro" id="IPR036638">
    <property type="entry name" value="HLH_DNA-bd_sf"/>
</dbReference>
<dbReference type="InterPro" id="IPR002546">
    <property type="entry name" value="MyoD_N"/>
</dbReference>
<dbReference type="InterPro" id="IPR039704">
    <property type="entry name" value="Myogenic_factor"/>
</dbReference>
<dbReference type="PANTHER" id="PTHR11534">
    <property type="entry name" value="MYOGENIC FACTOR"/>
    <property type="match status" value="1"/>
</dbReference>
<dbReference type="PANTHER" id="PTHR11534:SF5">
    <property type="entry name" value="MYOGENIN"/>
    <property type="match status" value="1"/>
</dbReference>
<dbReference type="Pfam" id="PF01586">
    <property type="entry name" value="Basic"/>
    <property type="match status" value="1"/>
</dbReference>
<dbReference type="Pfam" id="PF00010">
    <property type="entry name" value="HLH"/>
    <property type="match status" value="1"/>
</dbReference>
<dbReference type="SMART" id="SM00520">
    <property type="entry name" value="BASIC"/>
    <property type="match status" value="1"/>
</dbReference>
<dbReference type="SMART" id="SM00353">
    <property type="entry name" value="HLH"/>
    <property type="match status" value="1"/>
</dbReference>
<dbReference type="SUPFAM" id="SSF47459">
    <property type="entry name" value="HLH, helix-loop-helix DNA-binding domain"/>
    <property type="match status" value="1"/>
</dbReference>
<dbReference type="PROSITE" id="PS50888">
    <property type="entry name" value="BHLH"/>
    <property type="match status" value="1"/>
</dbReference>
<evidence type="ECO:0000250" key="1"/>
<evidence type="ECO:0000250" key="2">
    <source>
        <dbReference type="UniProtKB" id="P20428"/>
    </source>
</evidence>
<evidence type="ECO:0000255" key="3">
    <source>
        <dbReference type="PROSITE-ProRule" id="PRU00981"/>
    </source>
</evidence>
<evidence type="ECO:0000269" key="4">
    <source>
    </source>
</evidence>
<organism>
    <name type="scientific">Homo sapiens</name>
    <name type="common">Human</name>
    <dbReference type="NCBI Taxonomy" id="9606"/>
    <lineage>
        <taxon>Eukaryota</taxon>
        <taxon>Metazoa</taxon>
        <taxon>Chordata</taxon>
        <taxon>Craniata</taxon>
        <taxon>Vertebrata</taxon>
        <taxon>Euteleostomi</taxon>
        <taxon>Mammalia</taxon>
        <taxon>Eutheria</taxon>
        <taxon>Euarchontoglires</taxon>
        <taxon>Primates</taxon>
        <taxon>Haplorrhini</taxon>
        <taxon>Catarrhini</taxon>
        <taxon>Hominidae</taxon>
        <taxon>Homo</taxon>
    </lineage>
</organism>
<name>MYOG_HUMAN</name>
<accession>P15173</accession>
<accession>Q53XW6</accession>
<proteinExistence type="evidence at protein level"/>